<comment type="similarity">
    <text evidence="1">Belongs to the UPF0319 family.</text>
</comment>
<organism>
    <name type="scientific">Escherichia coli (strain SMS-3-5 / SECEC)</name>
    <dbReference type="NCBI Taxonomy" id="439855"/>
    <lineage>
        <taxon>Bacteria</taxon>
        <taxon>Pseudomonadati</taxon>
        <taxon>Pseudomonadota</taxon>
        <taxon>Gammaproteobacteria</taxon>
        <taxon>Enterobacterales</taxon>
        <taxon>Enterobacteriaceae</taxon>
        <taxon>Escherichia</taxon>
    </lineage>
</organism>
<feature type="signal peptide" evidence="1">
    <location>
        <begin position="1"/>
        <end position="20"/>
    </location>
</feature>
<feature type="chain" id="PRO_1000200485" description="UPF0319 protein YccT">
    <location>
        <begin position="21"/>
        <end position="220"/>
    </location>
</feature>
<reference key="1">
    <citation type="journal article" date="2008" name="J. Bacteriol.">
        <title>Insights into the environmental resistance gene pool from the genome sequence of the multidrug-resistant environmental isolate Escherichia coli SMS-3-5.</title>
        <authorList>
            <person name="Fricke W.F."/>
            <person name="Wright M.S."/>
            <person name="Lindell A.H."/>
            <person name="Harkins D.M."/>
            <person name="Baker-Austin C."/>
            <person name="Ravel J."/>
            <person name="Stepanauskas R."/>
        </authorList>
    </citation>
    <scope>NUCLEOTIDE SEQUENCE [LARGE SCALE GENOMIC DNA]</scope>
    <source>
        <strain>SMS-3-5 / SECEC</strain>
    </source>
</reference>
<protein>
    <recommendedName>
        <fullName evidence="1">UPF0319 protein YccT</fullName>
    </recommendedName>
</protein>
<sequence length="220" mass="24594">MKTGIVTTLIALCLPVSVFATTLRLSTDVDLLVLDGKKVSSSLLRGADSIELDNGPHQLVFRVEKTIHLSNSEERLYISPPLVVSFNTQLINQVNFRLPRLENEREANHFDAAPRLELLDGDATPIPVKLDILAITSTAKTIDYEVEVERYNKSAKRASLPQFATMMADDSTLLSGVSELDAIPPQSQVLTEQRLKYWFKLADPQTRNTFLQWAEKQPSS</sequence>
<keyword id="KW-0732">Signal</keyword>
<proteinExistence type="inferred from homology"/>
<dbReference type="EMBL" id="CP000970">
    <property type="protein sequence ID" value="ACB18980.1"/>
    <property type="molecule type" value="Genomic_DNA"/>
</dbReference>
<dbReference type="RefSeq" id="WP_000847791.1">
    <property type="nucleotide sequence ID" value="NC_010498.1"/>
</dbReference>
<dbReference type="KEGG" id="ecm:EcSMS35_2155"/>
<dbReference type="HOGENOM" id="CLU_073782_2_0_6"/>
<dbReference type="Proteomes" id="UP000007011">
    <property type="component" value="Chromosome"/>
</dbReference>
<dbReference type="HAMAP" id="MF_00789">
    <property type="entry name" value="UPF0319"/>
    <property type="match status" value="1"/>
</dbReference>
<dbReference type="InterPro" id="IPR018635">
    <property type="entry name" value="UPF0319"/>
</dbReference>
<dbReference type="NCBIfam" id="NF047712">
    <property type="entry name" value="CrliSynInhib"/>
    <property type="match status" value="1"/>
</dbReference>
<dbReference type="NCBIfam" id="NF002967">
    <property type="entry name" value="PRK03641.1"/>
    <property type="match status" value="1"/>
</dbReference>
<dbReference type="PANTHER" id="PTHR38108">
    <property type="entry name" value="UPF0319 PROTEIN YCCT"/>
    <property type="match status" value="1"/>
</dbReference>
<dbReference type="PANTHER" id="PTHR38108:SF1">
    <property type="entry name" value="UPF0319 PROTEIN YCCT"/>
    <property type="match status" value="1"/>
</dbReference>
<dbReference type="Pfam" id="PF09829">
    <property type="entry name" value="DUF2057"/>
    <property type="match status" value="1"/>
</dbReference>
<gene>
    <name evidence="1" type="primary">yccT</name>
    <name type="ordered locus">EcSMS35_2155</name>
</gene>
<accession>B1LJ34</accession>
<evidence type="ECO:0000255" key="1">
    <source>
        <dbReference type="HAMAP-Rule" id="MF_00789"/>
    </source>
</evidence>
<name>YCCT_ECOSM</name>